<feature type="chain" id="PRO_0000249954" description="Molybdenum cofactor sulfurase">
    <location>
        <begin position="1"/>
        <end position="709"/>
    </location>
</feature>
<feature type="domain" description="MOSC" evidence="2">
    <location>
        <begin position="563"/>
        <end position="707"/>
    </location>
</feature>
<feature type="active site" evidence="2">
    <location>
        <position position="367"/>
    </location>
</feature>
<feature type="modified residue" description="N6-(pyridoxal phosphate)lysine" evidence="2">
    <location>
        <position position="208"/>
    </location>
</feature>
<comment type="function">
    <text evidence="2">Sulfurates the molybdenum cofactor. Sulfation of molybdenum is essential for xanthine dehydrogenase (XDH) and aldehyde oxidase (ADO) enzymes in which molybdenum cofactor is liganded by 1 oxygen and 1 sulfur atom in active form.</text>
</comment>
<comment type="catalytic activity">
    <reaction evidence="2">
        <text>Mo-molybdopterin + L-cysteine + AH2 = thio-Mo-molybdopterin + L-alanine + A + H2O</text>
        <dbReference type="Rhea" id="RHEA:42636"/>
        <dbReference type="ChEBI" id="CHEBI:13193"/>
        <dbReference type="ChEBI" id="CHEBI:15377"/>
        <dbReference type="ChEBI" id="CHEBI:17499"/>
        <dbReference type="ChEBI" id="CHEBI:35235"/>
        <dbReference type="ChEBI" id="CHEBI:57972"/>
        <dbReference type="ChEBI" id="CHEBI:71302"/>
        <dbReference type="ChEBI" id="CHEBI:82685"/>
        <dbReference type="EC" id="2.8.1.9"/>
    </reaction>
</comment>
<comment type="cofactor">
    <cofactor evidence="2">
        <name>pyridoxal 5'-phosphate</name>
        <dbReference type="ChEBI" id="CHEBI:597326"/>
    </cofactor>
</comment>
<comment type="pathway">
    <text evidence="1">Cofactor biosynthesis; molybdopterin biosynthesis.</text>
</comment>
<comment type="similarity">
    <text evidence="2">Belongs to the class-V pyridoxal-phosphate-dependent aminotransferase family. MOCOS subfamily.</text>
</comment>
<protein>
    <recommendedName>
        <fullName evidence="2">Molybdenum cofactor sulfurase</fullName>
        <shortName evidence="2">MCS</shortName>
        <shortName evidence="2">MOS</shortName>
        <shortName evidence="2">MoCo sulfurase</shortName>
        <ecNumber evidence="2">2.8.1.9</ecNumber>
    </recommendedName>
    <alternativeName>
        <fullName evidence="2">Molybdenum cofactor sulfurtransferase</fullName>
    </alternativeName>
</protein>
<dbReference type="EC" id="2.8.1.9" evidence="2"/>
<dbReference type="EMBL" id="Z69793">
    <property type="protein sequence ID" value="CAA93672.2"/>
    <property type="molecule type" value="Genomic_DNA"/>
</dbReference>
<dbReference type="PIR" id="T23860">
    <property type="entry name" value="T23860"/>
</dbReference>
<dbReference type="RefSeq" id="NP_510552.2">
    <property type="nucleotide sequence ID" value="NM_078151.2"/>
</dbReference>
<dbReference type="SMR" id="Q21657"/>
<dbReference type="FunCoup" id="Q21657">
    <property type="interactions" value="697"/>
</dbReference>
<dbReference type="STRING" id="6239.R03A10.3.1"/>
<dbReference type="PaxDb" id="6239-R03A10.3"/>
<dbReference type="EnsemblMetazoa" id="R03A10.3.1">
    <property type="protein sequence ID" value="R03A10.3.1"/>
    <property type="gene ID" value="WBGene00010983"/>
</dbReference>
<dbReference type="GeneID" id="187534"/>
<dbReference type="KEGG" id="cel:CELE_R03A10.3"/>
<dbReference type="UCSC" id="R03A10.3">
    <property type="organism name" value="c. elegans"/>
</dbReference>
<dbReference type="AGR" id="WB:WBGene00010983"/>
<dbReference type="CTD" id="187534"/>
<dbReference type="WormBase" id="R03A10.3">
    <property type="protein sequence ID" value="CE30560"/>
    <property type="gene ID" value="WBGene00010983"/>
    <property type="gene designation" value="mocs-1"/>
</dbReference>
<dbReference type="eggNOG" id="KOG2142">
    <property type="taxonomic scope" value="Eukaryota"/>
</dbReference>
<dbReference type="eggNOG" id="KOG2362">
    <property type="taxonomic scope" value="Eukaryota"/>
</dbReference>
<dbReference type="GeneTree" id="ENSGT00940000157051"/>
<dbReference type="HOGENOM" id="CLU_010913_0_1_1"/>
<dbReference type="InParanoid" id="Q21657"/>
<dbReference type="OMA" id="PCTRCQM"/>
<dbReference type="OrthoDB" id="420046at2759"/>
<dbReference type="PhylomeDB" id="Q21657"/>
<dbReference type="Reactome" id="R-CEL-947581">
    <property type="pathway name" value="Molybdenum cofactor biosynthesis"/>
</dbReference>
<dbReference type="UniPathway" id="UPA00344"/>
<dbReference type="PRO" id="PR:Q21657"/>
<dbReference type="Proteomes" id="UP000001940">
    <property type="component" value="Chromosome X"/>
</dbReference>
<dbReference type="Bgee" id="WBGene00010983">
    <property type="expression patterns" value="Expressed in embryo and 2 other cell types or tissues"/>
</dbReference>
<dbReference type="GO" id="GO:0016829">
    <property type="term" value="F:lyase activity"/>
    <property type="evidence" value="ECO:0007669"/>
    <property type="project" value="UniProtKB-UniRule"/>
</dbReference>
<dbReference type="GO" id="GO:0008265">
    <property type="term" value="F:molybdenum cofactor sulfurtransferase activity"/>
    <property type="evidence" value="ECO:0000250"/>
    <property type="project" value="UniProtKB"/>
</dbReference>
<dbReference type="GO" id="GO:0030151">
    <property type="term" value="F:molybdenum ion binding"/>
    <property type="evidence" value="ECO:0007669"/>
    <property type="project" value="UniProtKB-UniRule"/>
</dbReference>
<dbReference type="GO" id="GO:0030170">
    <property type="term" value="F:pyridoxal phosphate binding"/>
    <property type="evidence" value="ECO:0007669"/>
    <property type="project" value="UniProtKB-UniRule"/>
</dbReference>
<dbReference type="GO" id="GO:0006777">
    <property type="term" value="P:Mo-molybdopterin cofactor biosynthetic process"/>
    <property type="evidence" value="ECO:0007669"/>
    <property type="project" value="UniProtKB-UniRule"/>
</dbReference>
<dbReference type="GO" id="GO:0043545">
    <property type="term" value="P:molybdopterin cofactor metabolic process"/>
    <property type="evidence" value="ECO:0000250"/>
    <property type="project" value="UniProtKB"/>
</dbReference>
<dbReference type="Gene3D" id="3.90.1150.10">
    <property type="entry name" value="Aspartate Aminotransferase, domain 1"/>
    <property type="match status" value="1"/>
</dbReference>
<dbReference type="Gene3D" id="3.40.640.10">
    <property type="entry name" value="Type I PLP-dependent aspartate aminotransferase-like (Major domain)"/>
    <property type="match status" value="1"/>
</dbReference>
<dbReference type="HAMAP" id="MF_03050">
    <property type="entry name" value="MOCOS"/>
    <property type="match status" value="1"/>
</dbReference>
<dbReference type="InterPro" id="IPR000192">
    <property type="entry name" value="Aminotrans_V_dom"/>
</dbReference>
<dbReference type="InterPro" id="IPR005302">
    <property type="entry name" value="MoCF_Sase_C"/>
</dbReference>
<dbReference type="InterPro" id="IPR028886">
    <property type="entry name" value="MoCo_sulfurase"/>
</dbReference>
<dbReference type="InterPro" id="IPR005303">
    <property type="entry name" value="MOCOS_middle"/>
</dbReference>
<dbReference type="InterPro" id="IPR015424">
    <property type="entry name" value="PyrdxlP-dep_Trfase"/>
</dbReference>
<dbReference type="InterPro" id="IPR015421">
    <property type="entry name" value="PyrdxlP-dep_Trfase_major"/>
</dbReference>
<dbReference type="InterPro" id="IPR015422">
    <property type="entry name" value="PyrdxlP-dep_Trfase_small"/>
</dbReference>
<dbReference type="InterPro" id="IPR011037">
    <property type="entry name" value="Pyrv_Knase-like_insert_dom_sf"/>
</dbReference>
<dbReference type="PANTHER" id="PTHR14237:SF19">
    <property type="entry name" value="MITOCHONDRIAL AMIDOXIME REDUCING COMPONENT 1"/>
    <property type="match status" value="1"/>
</dbReference>
<dbReference type="PANTHER" id="PTHR14237">
    <property type="entry name" value="MOLYBDOPTERIN COFACTOR SULFURASE MOSC"/>
    <property type="match status" value="1"/>
</dbReference>
<dbReference type="Pfam" id="PF00266">
    <property type="entry name" value="Aminotran_5"/>
    <property type="match status" value="1"/>
</dbReference>
<dbReference type="Pfam" id="PF03473">
    <property type="entry name" value="MOSC"/>
    <property type="match status" value="1"/>
</dbReference>
<dbReference type="Pfam" id="PF03476">
    <property type="entry name" value="MOSC_N"/>
    <property type="match status" value="1"/>
</dbReference>
<dbReference type="SUPFAM" id="SSF141673">
    <property type="entry name" value="MOSC N-terminal domain-like"/>
    <property type="match status" value="1"/>
</dbReference>
<dbReference type="SUPFAM" id="SSF50800">
    <property type="entry name" value="PK beta-barrel domain-like"/>
    <property type="match status" value="1"/>
</dbReference>
<dbReference type="SUPFAM" id="SSF53383">
    <property type="entry name" value="PLP-dependent transferases"/>
    <property type="match status" value="1"/>
</dbReference>
<dbReference type="PROSITE" id="PS51340">
    <property type="entry name" value="MOSC"/>
    <property type="match status" value="1"/>
</dbReference>
<keyword id="KW-0501">Molybdenum cofactor biosynthesis</keyword>
<keyword id="KW-0663">Pyridoxal phosphate</keyword>
<keyword id="KW-1185">Reference proteome</keyword>
<keyword id="KW-0808">Transferase</keyword>
<reference key="1">
    <citation type="journal article" date="1998" name="Science">
        <title>Genome sequence of the nematode C. elegans: a platform for investigating biology.</title>
        <authorList>
            <consortium name="The C. elegans sequencing consortium"/>
        </authorList>
    </citation>
    <scope>NUCLEOTIDE SEQUENCE [LARGE SCALE GENOMIC DNA]</scope>
    <source>
        <strain>Bristol N2</strain>
    </source>
</reference>
<sequence>MPYLDHAGSTLPSKIQLEEVAKQQSQLILANPHSHHATAVKTKQIVNSARLRILQYFNTTSDDYFVVLTNNTTHGLKIVAENFKFGQKTHSILNIASVLHGGSSNLGYLYDSHHSVVGLRHVVNGKVNSISCVNEESILEHEIPDVEHSLFVLTAMSNFCGKKYSLESVHRLQEKGWAVCLDAASFVSSSALDLSQQRPNFIAFSFYKIFGYPTGIGALLVRKDSAHLIEKTSFAGGTVQSVDEMSMFFVLREFERAFEEGTLNYYGIAQLQKGFEEIERCGGISSIRNLTHHLCKNALYMLKSKKHPNGRPVVEIYSQSEQFENPDKQGPIVAFNLKRPDGGYYGYTEVEKMCAIFGIELRTGCFCNIGACKKYLGITSEMIQENMSKGKRCGDEIDLINGTPTGAIRISFGRTSTEHDITALEQMIDTCFTEGEHQAQSKPDPMNIESYSPTVVNLFSFPIKSVGSVGRKRYELTARGFKNDREFLIVNDDVTLNLKTHPELCMLTATIVDDDQLLIQTFDQNENLVLPMSLSLKDNGAKLVCKNTIATMDCGDKVGKWLDNALDRQNCRLLRVAEDSKKNFVNDSPFLLINEASVYMLSRYINMEVREILTRFRSNIVVRGLPPFIEDTAKRLSIENLEFEVVDKCTRCEMICVDPMTGEKDPSLLLALRDYRNKQKMTFGIYIRQTNFESGQYLESGMSVNFSTD</sequence>
<evidence type="ECO:0000250" key="1">
    <source>
        <dbReference type="UniProtKB" id="Q96EN8"/>
    </source>
</evidence>
<evidence type="ECO:0000255" key="2">
    <source>
        <dbReference type="HAMAP-Rule" id="MF_03050"/>
    </source>
</evidence>
<evidence type="ECO:0000312" key="3">
    <source>
        <dbReference type="WormBase" id="R03A10.3"/>
    </source>
</evidence>
<proteinExistence type="inferred from homology"/>
<gene>
    <name evidence="3" type="primary">mocs-1</name>
    <name evidence="3" type="ORF">R03A10.3</name>
</gene>
<accession>Q21657</accession>
<name>MOCOS_CAEEL</name>
<organism>
    <name type="scientific">Caenorhabditis elegans</name>
    <dbReference type="NCBI Taxonomy" id="6239"/>
    <lineage>
        <taxon>Eukaryota</taxon>
        <taxon>Metazoa</taxon>
        <taxon>Ecdysozoa</taxon>
        <taxon>Nematoda</taxon>
        <taxon>Chromadorea</taxon>
        <taxon>Rhabditida</taxon>
        <taxon>Rhabditina</taxon>
        <taxon>Rhabditomorpha</taxon>
        <taxon>Rhabditoidea</taxon>
        <taxon>Rhabditidae</taxon>
        <taxon>Peloderinae</taxon>
        <taxon>Caenorhabditis</taxon>
    </lineage>
</organism>